<dbReference type="EC" id="4.1.2.4" evidence="1"/>
<dbReference type="EMBL" id="CP001344">
    <property type="protein sequence ID" value="ACL43363.1"/>
    <property type="molecule type" value="Genomic_DNA"/>
</dbReference>
<dbReference type="SMR" id="B8HXS4"/>
<dbReference type="STRING" id="395961.Cyan7425_0977"/>
<dbReference type="KEGG" id="cyn:Cyan7425_0977"/>
<dbReference type="eggNOG" id="COG0274">
    <property type="taxonomic scope" value="Bacteria"/>
</dbReference>
<dbReference type="HOGENOM" id="CLU_053595_0_1_3"/>
<dbReference type="OrthoDB" id="9778711at2"/>
<dbReference type="UniPathway" id="UPA00002">
    <property type="reaction ID" value="UER00468"/>
</dbReference>
<dbReference type="GO" id="GO:0005737">
    <property type="term" value="C:cytoplasm"/>
    <property type="evidence" value="ECO:0007669"/>
    <property type="project" value="UniProtKB-SubCell"/>
</dbReference>
<dbReference type="GO" id="GO:0004139">
    <property type="term" value="F:deoxyribose-phosphate aldolase activity"/>
    <property type="evidence" value="ECO:0007669"/>
    <property type="project" value="UniProtKB-UniRule"/>
</dbReference>
<dbReference type="GO" id="GO:0006018">
    <property type="term" value="P:2-deoxyribose 1-phosphate catabolic process"/>
    <property type="evidence" value="ECO:0007669"/>
    <property type="project" value="UniProtKB-UniRule"/>
</dbReference>
<dbReference type="GO" id="GO:0016052">
    <property type="term" value="P:carbohydrate catabolic process"/>
    <property type="evidence" value="ECO:0007669"/>
    <property type="project" value="TreeGrafter"/>
</dbReference>
<dbReference type="GO" id="GO:0009264">
    <property type="term" value="P:deoxyribonucleotide catabolic process"/>
    <property type="evidence" value="ECO:0007669"/>
    <property type="project" value="InterPro"/>
</dbReference>
<dbReference type="CDD" id="cd00959">
    <property type="entry name" value="DeoC"/>
    <property type="match status" value="1"/>
</dbReference>
<dbReference type="FunFam" id="3.20.20.70:FF:000044">
    <property type="entry name" value="Deoxyribose-phosphate aldolase"/>
    <property type="match status" value="1"/>
</dbReference>
<dbReference type="Gene3D" id="3.20.20.70">
    <property type="entry name" value="Aldolase class I"/>
    <property type="match status" value="1"/>
</dbReference>
<dbReference type="HAMAP" id="MF_00114">
    <property type="entry name" value="DeoC_type1"/>
    <property type="match status" value="1"/>
</dbReference>
<dbReference type="InterPro" id="IPR013785">
    <property type="entry name" value="Aldolase_TIM"/>
</dbReference>
<dbReference type="InterPro" id="IPR011343">
    <property type="entry name" value="DeoC"/>
</dbReference>
<dbReference type="InterPro" id="IPR002915">
    <property type="entry name" value="DeoC/FbaB/LacD_aldolase"/>
</dbReference>
<dbReference type="InterPro" id="IPR028581">
    <property type="entry name" value="DeoC_typeI"/>
</dbReference>
<dbReference type="NCBIfam" id="TIGR00126">
    <property type="entry name" value="deoC"/>
    <property type="match status" value="1"/>
</dbReference>
<dbReference type="PANTHER" id="PTHR10889">
    <property type="entry name" value="DEOXYRIBOSE-PHOSPHATE ALDOLASE"/>
    <property type="match status" value="1"/>
</dbReference>
<dbReference type="PANTHER" id="PTHR10889:SF1">
    <property type="entry name" value="DEOXYRIBOSE-PHOSPHATE ALDOLASE"/>
    <property type="match status" value="1"/>
</dbReference>
<dbReference type="Pfam" id="PF01791">
    <property type="entry name" value="DeoC"/>
    <property type="match status" value="1"/>
</dbReference>
<dbReference type="PIRSF" id="PIRSF001357">
    <property type="entry name" value="DeoC"/>
    <property type="match status" value="1"/>
</dbReference>
<dbReference type="SMART" id="SM01133">
    <property type="entry name" value="DeoC"/>
    <property type="match status" value="1"/>
</dbReference>
<dbReference type="SUPFAM" id="SSF51569">
    <property type="entry name" value="Aldolase"/>
    <property type="match status" value="1"/>
</dbReference>
<gene>
    <name evidence="1" type="primary">deoC</name>
    <name type="ordered locus">Cyan7425_0977</name>
</gene>
<feature type="chain" id="PRO_1000119175" description="Deoxyribose-phosphate aldolase">
    <location>
        <begin position="1"/>
        <end position="228"/>
    </location>
</feature>
<feature type="active site" description="Proton donor/acceptor" evidence="1">
    <location>
        <position position="96"/>
    </location>
</feature>
<feature type="active site" description="Schiff-base intermediate with acetaldehyde" evidence="1">
    <location>
        <position position="157"/>
    </location>
</feature>
<feature type="active site" description="Proton donor/acceptor" evidence="1">
    <location>
        <position position="185"/>
    </location>
</feature>
<comment type="function">
    <text evidence="1">Catalyzes a reversible aldol reaction between acetaldehyde and D-glyceraldehyde 3-phosphate to generate 2-deoxy-D-ribose 5-phosphate.</text>
</comment>
<comment type="catalytic activity">
    <reaction evidence="1">
        <text>2-deoxy-D-ribose 5-phosphate = D-glyceraldehyde 3-phosphate + acetaldehyde</text>
        <dbReference type="Rhea" id="RHEA:12821"/>
        <dbReference type="ChEBI" id="CHEBI:15343"/>
        <dbReference type="ChEBI" id="CHEBI:59776"/>
        <dbReference type="ChEBI" id="CHEBI:62877"/>
        <dbReference type="EC" id="4.1.2.4"/>
    </reaction>
</comment>
<comment type="pathway">
    <text evidence="1">Carbohydrate degradation; 2-deoxy-D-ribose 1-phosphate degradation; D-glyceraldehyde 3-phosphate and acetaldehyde from 2-deoxy-alpha-D-ribose 1-phosphate: step 2/2.</text>
</comment>
<comment type="subcellular location">
    <subcellularLocation>
        <location evidence="1">Cytoplasm</location>
    </subcellularLocation>
</comment>
<comment type="similarity">
    <text evidence="1">Belongs to the DeoC/FbaB aldolase family. DeoC type 1 subfamily.</text>
</comment>
<evidence type="ECO:0000255" key="1">
    <source>
        <dbReference type="HAMAP-Rule" id="MF_00114"/>
    </source>
</evidence>
<sequence length="228" mass="24291">MVAPSAEIDLAPYIDHTLLDPLATPAAIAQLCEEADRYHFATVCLAPIYVRQAVELLYRRTPRVCTVIGFPTGAHTSAVKLYEAQEAADHGATELDVVVNLGWLKAGQTEAVHQEMAEIVAATGVTVKAILETTVLSETEKRLAAEICLDAGVSFLKTSTGWRGGATVADVKLLAQVARDRIGVKASGGIRTAAQALELIHAGATRLGTSRGVDLIRNRDTLEGETNY</sequence>
<name>DEOC_CYAP4</name>
<proteinExistence type="inferred from homology"/>
<keyword id="KW-0963">Cytoplasm</keyword>
<keyword id="KW-0456">Lyase</keyword>
<keyword id="KW-0704">Schiff base</keyword>
<reference key="1">
    <citation type="journal article" date="2011" name="MBio">
        <title>Novel metabolic attributes of the genus Cyanothece, comprising a group of unicellular nitrogen-fixing Cyanobacteria.</title>
        <authorList>
            <person name="Bandyopadhyay A."/>
            <person name="Elvitigala T."/>
            <person name="Welsh E."/>
            <person name="Stockel J."/>
            <person name="Liberton M."/>
            <person name="Min H."/>
            <person name="Sherman L.A."/>
            <person name="Pakrasi H.B."/>
        </authorList>
    </citation>
    <scope>NUCLEOTIDE SEQUENCE [LARGE SCALE GENOMIC DNA]</scope>
    <source>
        <strain>PCC 7425 / ATCC 29141</strain>
    </source>
</reference>
<accession>B8HXS4</accession>
<protein>
    <recommendedName>
        <fullName evidence="1">Deoxyribose-phosphate aldolase</fullName>
        <shortName evidence="1">DERA</shortName>
        <ecNumber evidence="1">4.1.2.4</ecNumber>
    </recommendedName>
    <alternativeName>
        <fullName evidence="1">2-deoxy-D-ribose 5-phosphate aldolase</fullName>
    </alternativeName>
    <alternativeName>
        <fullName evidence="1">Phosphodeoxyriboaldolase</fullName>
        <shortName evidence="1">Deoxyriboaldolase</shortName>
    </alternativeName>
</protein>
<organism>
    <name type="scientific">Cyanothece sp. (strain PCC 7425 / ATCC 29141)</name>
    <dbReference type="NCBI Taxonomy" id="395961"/>
    <lineage>
        <taxon>Bacteria</taxon>
        <taxon>Bacillati</taxon>
        <taxon>Cyanobacteriota</taxon>
        <taxon>Cyanophyceae</taxon>
        <taxon>Gomontiellales</taxon>
        <taxon>Cyanothecaceae</taxon>
        <taxon>Cyanothece</taxon>
    </lineage>
</organism>